<comment type="function">
    <text evidence="2">Inhibits papain and ficin (cysteine proteinases) but not trypsin (a serine proteinase).</text>
</comment>
<comment type="subcellular location">
    <subcellularLocation>
        <location evidence="4">Cytoplasm</location>
    </subcellularLocation>
    <subcellularLocation>
        <location evidence="4">Vacuole</location>
    </subcellularLocation>
</comment>
<comment type="tissue specificity">
    <text evidence="4">Expressed in the skin, liver. intestine, spleen, pancreas and kidney.</text>
</comment>
<comment type="PTM">
    <text evidence="3">N-glycosylated, with sialylated biantennary complex-type glycans.</text>
</comment>
<comment type="PTM">
    <text evidence="3">O-glycosylated, with sialylated oligosaccharides.</text>
</comment>
<comment type="mass spectrometry" mass="43000.0" method="MALDI" evidence="2 5">
    <molecule>Cystein proteinase inhibitor protein salarin</molecule>
</comment>
<organism>
    <name type="scientific">Salmo salar</name>
    <name type="common">Atlantic salmon</name>
    <dbReference type="NCBI Taxonomy" id="8030"/>
    <lineage>
        <taxon>Eukaryota</taxon>
        <taxon>Metazoa</taxon>
        <taxon>Chordata</taxon>
        <taxon>Craniata</taxon>
        <taxon>Vertebrata</taxon>
        <taxon>Euteleostomi</taxon>
        <taxon>Actinopterygii</taxon>
        <taxon>Neopterygii</taxon>
        <taxon>Teleostei</taxon>
        <taxon>Protacanthopterygii</taxon>
        <taxon>Salmoniformes</taxon>
        <taxon>Salmonidae</taxon>
        <taxon>Salmoninae</taxon>
        <taxon>Salmo</taxon>
    </lineage>
</organism>
<evidence type="ECO:0000255" key="1"/>
<evidence type="ECO:0000269" key="2">
    <source>
    </source>
</evidence>
<evidence type="ECO:0000269" key="3">
    <source>
    </source>
</evidence>
<evidence type="ECO:0000269" key="4">
    <source>
    </source>
</evidence>
<evidence type="ECO:0000269" key="5">
    <source>
    </source>
</evidence>
<name>SALRN_SALSA</name>
<reference key="1">
    <citation type="journal article" date="2003" name="Biochimie">
        <title>A new type of cysteine proteinase inhibitor--the salarin gene from Atlantic salmon (Salmo salar L.) and Arctic charr (Salvelinus alpinus).</title>
        <authorList>
            <person name="Olonen A."/>
            <person name="Kalkkinen N."/>
            <person name="Paulin L."/>
        </authorList>
    </citation>
    <scope>NUCLEOTIDE SEQUENCE [GENOMIC DNA]</scope>
    <scope>PROTEIN SEQUENCE OF N-TERMINUS</scope>
    <scope>PARTIAL PROTEIN SEQUENCE</scope>
    <scope>MASS SPECTROMETRY</scope>
    <source>
        <tissue>Liver</tissue>
    </source>
</reference>
<reference key="2">
    <citation type="journal article" date="2010" name="BMC Genomics">
        <title>Salmo salar and Esox lucius full-length cDNA sequences reveal changes in evolutionary pressures on a post-tetraploidization genome.</title>
        <authorList>
            <person name="Leong J.S."/>
            <person name="Jantzen S.G."/>
            <person name="von Schalburg K.R."/>
            <person name="Cooper G.A."/>
            <person name="Messmer A.M."/>
            <person name="Liao N.Y."/>
            <person name="Munro S."/>
            <person name="Moore R."/>
            <person name="Holt R.A."/>
            <person name="Jones S.J."/>
            <person name="Davidson W.S."/>
            <person name="Koop B.F."/>
        </authorList>
    </citation>
    <scope>NUCLEOTIDE SEQUENCE [MRNA]</scope>
    <source>
        <tissue>Head kidney</tissue>
    </source>
</reference>
<reference key="3">
    <citation type="journal article" date="1999" name="Eur. J. Biochem.">
        <title>Atlantic salmon (Salmo salar L.) skin contains a novel kininogen and another cysteine proteinase inhibitor.</title>
        <authorList>
            <person name="Yloenen A."/>
            <person name="Rinne A."/>
            <person name="Herttuainen J."/>
            <person name="Bogwald J."/>
            <person name="Jaervinen M."/>
            <person name="Kalkkinen N."/>
        </authorList>
    </citation>
    <scope>PROTEIN SEQUENCE OF N-TERMINUS</scope>
    <scope>PARTIAL PROTEIN SEQUENCE</scope>
    <scope>FUNCTION</scope>
    <scope>MASS SPECTROMETRY</scope>
    <scope>GLYCOSYLATION</scope>
</reference>
<reference key="4">
    <citation type="journal article" date="2001" name="Glycobiology">
        <title>Glycosylation analysis of two cysteine proteinase inhibitors from Atlantic salmon skin: di-O-acetylated sialic acids are the major sialic acid species on N-glycans.</title>
        <authorList>
            <person name="Yloenen A."/>
            <person name="Kalkkinen N."/>
            <person name="Saarinen J."/>
            <person name="Boegwald J."/>
            <person name="Helin J."/>
        </authorList>
    </citation>
    <scope>PROTEIN SEQUENCE OF 151-175 AND 178-201</scope>
    <scope>IDENTIFICATION BY MASS SPECTROMETRY</scope>
    <scope>GLYCOSYLATION AT ASN-153 AND THR-184</scope>
</reference>
<reference key="5">
    <citation type="journal article" date="2002" name="Cell Tissue Res.">
        <title>Immunolocalization of cysteine proteinases (cathepsins) and cysteine proteinase inhibitors (salarin and salmon kininogen) in Atlantic salmon, Salmo salar.</title>
        <authorList>
            <person name="Taehtinen V."/>
            <person name="Weber E."/>
            <person name="Guenther D."/>
            <person name="Yloenen A."/>
            <person name="Kalkkinen N."/>
            <person name="Olsen R."/>
            <person name="Jaervinen M."/>
            <person name="Soederstroem K.O."/>
            <person name="Rinne A."/>
            <person name="Bjoerklund H."/>
            <person name="Boegwald J."/>
        </authorList>
    </citation>
    <scope>SUBCELLULAR LOCATION</scope>
    <scope>TISSUE SPECIFICITY</scope>
</reference>
<protein>
    <recommendedName>
        <fullName>Cystein proteinase inhibitor protein salarin</fullName>
    </recommendedName>
    <alternativeName>
        <fullName>Cathepsin M</fullName>
    </alternativeName>
</protein>
<proteinExistence type="evidence at protein level"/>
<sequence length="342" mass="39496">MKSLVLLLLVAVTVSSVVSKPLPEDSEAEVHKEFETWKVKYGKSYPSTEEEAKRKEMWLATRKKVMEHNTRAGNGLESYTMAVNHLADLTTEEVPKGLLPMPRPEEEEVDKEFEMWKTHNGKTYNSTEEEAKRKEIWLATRARVMEHNKRAENGSESFTMGINYFSDMTFEEIPKARLMVVFPTRDGGEEAEVDKEFETWKVQHGKNYGSTEEEAKRKGIWLATRTRVMEHNKRAETGSESFTMGMNHLSDKTTAEVTGRRLQDGEEAEVHKEFETWKVKYGKTYPSTVEEAKRKEIWLATRKMVMEHNKRAENGLESFTMGVNHFADLTAEEVPRGLFPME</sequence>
<accession>Q70SU8</accession>
<gene>
    <name type="primary">salarin</name>
    <name type="synonym">catm</name>
</gene>
<feature type="signal peptide" evidence="5">
    <location>
        <begin position="1"/>
        <end position="19"/>
    </location>
</feature>
<feature type="chain" id="PRO_5009732209" description="Cystein proteinase inhibitor protein salarin" evidence="1">
    <location>
        <begin position="20"/>
        <end position="342"/>
    </location>
</feature>
<feature type="glycosylation site" description="N-linked (GlcNAc) asparagine" evidence="3">
    <location>
        <position position="153"/>
    </location>
</feature>
<feature type="glycosylation site" description="O-linked (GlcNAc) threonine" evidence="3">
    <location>
        <position position="184"/>
    </location>
</feature>
<keyword id="KW-0963">Cytoplasm</keyword>
<keyword id="KW-0903">Direct protein sequencing</keyword>
<keyword id="KW-0325">Glycoprotein</keyword>
<keyword id="KW-0646">Protease inhibitor</keyword>
<keyword id="KW-1185">Reference proteome</keyword>
<keyword id="KW-0732">Signal</keyword>
<keyword id="KW-0789">Thiol protease inhibitor</keyword>
<keyword id="KW-0926">Vacuole</keyword>
<dbReference type="EMBL" id="AJ550228">
    <property type="protein sequence ID" value="CAD80246.1"/>
    <property type="molecule type" value="Genomic_DNA"/>
</dbReference>
<dbReference type="EMBL" id="BT046998">
    <property type="protein sequence ID" value="ACI66799.1"/>
    <property type="molecule type" value="mRNA"/>
</dbReference>
<dbReference type="RefSeq" id="NP_001134251.1">
    <property type="nucleotide sequence ID" value="NM_001140779.2"/>
</dbReference>
<dbReference type="SMR" id="Q70SU8"/>
<dbReference type="STRING" id="8030.ENSSSAP00000118228"/>
<dbReference type="MEROPS" id="I29.951"/>
<dbReference type="GlyConnect" id="3008">
    <property type="glycosylation" value="15 N-Linked glycans (1 site), 6 O-Linked glycans (1 site)"/>
</dbReference>
<dbReference type="GlyCosmos" id="Q70SU8">
    <property type="glycosylation" value="2 sites, No reported glycans"/>
</dbReference>
<dbReference type="iPTMnet" id="Q70SU8"/>
<dbReference type="PaxDb" id="8030-ENSSSAP00000118228"/>
<dbReference type="Ensembl" id="ENSSSAT00020135394">
    <property type="protein sequence ID" value="ENSSSAP00020103169"/>
    <property type="gene ID" value="ENSSSAG00020059867"/>
</dbReference>
<dbReference type="Ensembl" id="ENSSSAT00075057533">
    <property type="protein sequence ID" value="ENSSSAP00075040465"/>
    <property type="gene ID" value="ENSSSAG00075027528"/>
</dbReference>
<dbReference type="GeneID" id="100195750"/>
<dbReference type="KEGG" id="sasa:100195750"/>
<dbReference type="OrthoDB" id="327877at7898"/>
<dbReference type="Proteomes" id="UP000087266">
    <property type="component" value="Chromosome ssa17"/>
</dbReference>
<dbReference type="Bgee" id="ENSSSAG00000080729">
    <property type="expression patterns" value="Expressed in heart and 24 other cell types or tissues"/>
</dbReference>
<dbReference type="GO" id="GO:0005737">
    <property type="term" value="C:cytoplasm"/>
    <property type="evidence" value="ECO:0000314"/>
    <property type="project" value="AgBase"/>
</dbReference>
<dbReference type="GO" id="GO:0005615">
    <property type="term" value="C:extracellular space"/>
    <property type="evidence" value="ECO:0000314"/>
    <property type="project" value="AgBase"/>
</dbReference>
<dbReference type="GO" id="GO:0005773">
    <property type="term" value="C:vacuole"/>
    <property type="evidence" value="ECO:0000314"/>
    <property type="project" value="AgBase"/>
</dbReference>
<dbReference type="GO" id="GO:0004869">
    <property type="term" value="F:cysteine-type endopeptidase inhibitor activity"/>
    <property type="evidence" value="ECO:0000314"/>
    <property type="project" value="AgBase"/>
</dbReference>
<dbReference type="GO" id="GO:0002020">
    <property type="term" value="F:protease binding"/>
    <property type="evidence" value="ECO:0000314"/>
    <property type="project" value="AgBase"/>
</dbReference>
<dbReference type="FunFam" id="1.10.287.2250:FF:000003">
    <property type="entry name" value="Cathepsin L"/>
    <property type="match status" value="4"/>
</dbReference>
<dbReference type="Gene3D" id="1.10.287.2250">
    <property type="match status" value="4"/>
</dbReference>
<dbReference type="InterPro" id="IPR038765">
    <property type="entry name" value="Papain-like_cys_pep_sf"/>
</dbReference>
<dbReference type="InterPro" id="IPR013201">
    <property type="entry name" value="Prot_inhib_I29"/>
</dbReference>
<dbReference type="Pfam" id="PF08246">
    <property type="entry name" value="Inhibitor_I29"/>
    <property type="match status" value="4"/>
</dbReference>
<dbReference type="SMART" id="SM00848">
    <property type="entry name" value="Inhibitor_I29"/>
    <property type="match status" value="4"/>
</dbReference>
<dbReference type="SUPFAM" id="SSF54001">
    <property type="entry name" value="Cysteine proteinases"/>
    <property type="match status" value="4"/>
</dbReference>